<sequence length="438" mass="50297">MKLWGGRFKGEENKLMEDFNSSLSFDKRLYKEDILGSKAHVKMLGNCNILKDYEVEEIIKGLDSILKDIEDDKLKIQGEYEDIHSFIESNLIQRIGDVGKKLHTARSRNDQVAVDFKLYAKNISLKIIESIETLQNTIKNLAEKNNVIMPGYTHLQRAQVVTFKHHIMAYYNMLKRDKKRIENSIENMDESPLGCCALAGTTYETDRKFTAKKLGFRKEVDNFLDGVSDRDFVIEFISDFSIIMMHLSRLSEELILWSSKEFDFIEISDEFSTGSSIMPQKKNPDAAELIRGKTGRVYGDLIAILTVMKGIPLAYNKDMQEDKESFFDASDTVLSCIKVMEGMLSSLKVKKGNTLRAVKMGFLNATESADYLVLKGVPFRDAHKIIGEIVLYCEEKDKSIEELNINELKKFSTFFNEDIYEFIDYENALNRGIKKEIK</sequence>
<evidence type="ECO:0000255" key="1">
    <source>
        <dbReference type="HAMAP-Rule" id="MF_00006"/>
    </source>
</evidence>
<dbReference type="EC" id="4.3.2.1" evidence="1"/>
<dbReference type="EMBL" id="AE015927">
    <property type="protein sequence ID" value="AAO35181.1"/>
    <property type="molecule type" value="Genomic_DNA"/>
</dbReference>
<dbReference type="RefSeq" id="WP_011098847.1">
    <property type="nucleotide sequence ID" value="NC_004557.1"/>
</dbReference>
<dbReference type="SMR" id="P59616"/>
<dbReference type="STRING" id="212717.CTC_00562"/>
<dbReference type="GeneID" id="24254794"/>
<dbReference type="KEGG" id="ctc:CTC_00562"/>
<dbReference type="HOGENOM" id="CLU_027272_2_3_9"/>
<dbReference type="OrthoDB" id="9769623at2"/>
<dbReference type="UniPathway" id="UPA00068">
    <property type="reaction ID" value="UER00114"/>
</dbReference>
<dbReference type="Proteomes" id="UP000001412">
    <property type="component" value="Chromosome"/>
</dbReference>
<dbReference type="GO" id="GO:0005829">
    <property type="term" value="C:cytosol"/>
    <property type="evidence" value="ECO:0007669"/>
    <property type="project" value="TreeGrafter"/>
</dbReference>
<dbReference type="GO" id="GO:0004056">
    <property type="term" value="F:argininosuccinate lyase activity"/>
    <property type="evidence" value="ECO:0007669"/>
    <property type="project" value="UniProtKB-UniRule"/>
</dbReference>
<dbReference type="GO" id="GO:0042450">
    <property type="term" value="P:arginine biosynthetic process via ornithine"/>
    <property type="evidence" value="ECO:0007669"/>
    <property type="project" value="InterPro"/>
</dbReference>
<dbReference type="GO" id="GO:0006526">
    <property type="term" value="P:L-arginine biosynthetic process"/>
    <property type="evidence" value="ECO:0007669"/>
    <property type="project" value="UniProtKB-UniRule"/>
</dbReference>
<dbReference type="CDD" id="cd01359">
    <property type="entry name" value="Argininosuccinate_lyase"/>
    <property type="match status" value="1"/>
</dbReference>
<dbReference type="FunFam" id="1.10.275.10:FF:000002">
    <property type="entry name" value="Argininosuccinate lyase"/>
    <property type="match status" value="1"/>
</dbReference>
<dbReference type="FunFam" id="1.10.40.30:FF:000001">
    <property type="entry name" value="Argininosuccinate lyase"/>
    <property type="match status" value="1"/>
</dbReference>
<dbReference type="FunFam" id="1.20.200.10:FF:000002">
    <property type="entry name" value="Argininosuccinate lyase"/>
    <property type="match status" value="1"/>
</dbReference>
<dbReference type="Gene3D" id="1.10.40.30">
    <property type="entry name" value="Fumarase/aspartase (C-terminal domain)"/>
    <property type="match status" value="1"/>
</dbReference>
<dbReference type="Gene3D" id="1.20.200.10">
    <property type="entry name" value="Fumarase/aspartase (Central domain)"/>
    <property type="match status" value="1"/>
</dbReference>
<dbReference type="Gene3D" id="1.10.275.10">
    <property type="entry name" value="Fumarase/aspartase (N-terminal domain)"/>
    <property type="match status" value="1"/>
</dbReference>
<dbReference type="HAMAP" id="MF_00006">
    <property type="entry name" value="Arg_succ_lyase"/>
    <property type="match status" value="1"/>
</dbReference>
<dbReference type="InterPro" id="IPR029419">
    <property type="entry name" value="Arg_succ_lyase_C"/>
</dbReference>
<dbReference type="InterPro" id="IPR009049">
    <property type="entry name" value="Argininosuccinate_lyase"/>
</dbReference>
<dbReference type="InterPro" id="IPR024083">
    <property type="entry name" value="Fumarase/histidase_N"/>
</dbReference>
<dbReference type="InterPro" id="IPR020557">
    <property type="entry name" value="Fumarate_lyase_CS"/>
</dbReference>
<dbReference type="InterPro" id="IPR000362">
    <property type="entry name" value="Fumarate_lyase_fam"/>
</dbReference>
<dbReference type="InterPro" id="IPR022761">
    <property type="entry name" value="Fumarate_lyase_N"/>
</dbReference>
<dbReference type="InterPro" id="IPR008948">
    <property type="entry name" value="L-Aspartase-like"/>
</dbReference>
<dbReference type="NCBIfam" id="TIGR00838">
    <property type="entry name" value="argH"/>
    <property type="match status" value="1"/>
</dbReference>
<dbReference type="PANTHER" id="PTHR43814">
    <property type="entry name" value="ARGININOSUCCINATE LYASE"/>
    <property type="match status" value="1"/>
</dbReference>
<dbReference type="PANTHER" id="PTHR43814:SF1">
    <property type="entry name" value="ARGININOSUCCINATE LYASE"/>
    <property type="match status" value="1"/>
</dbReference>
<dbReference type="Pfam" id="PF14698">
    <property type="entry name" value="ASL_C2"/>
    <property type="match status" value="1"/>
</dbReference>
<dbReference type="Pfam" id="PF00206">
    <property type="entry name" value="Lyase_1"/>
    <property type="match status" value="1"/>
</dbReference>
<dbReference type="PRINTS" id="PR00145">
    <property type="entry name" value="ARGSUCLYASE"/>
</dbReference>
<dbReference type="PRINTS" id="PR00149">
    <property type="entry name" value="FUMRATELYASE"/>
</dbReference>
<dbReference type="SUPFAM" id="SSF48557">
    <property type="entry name" value="L-aspartase-like"/>
    <property type="match status" value="1"/>
</dbReference>
<dbReference type="PROSITE" id="PS00163">
    <property type="entry name" value="FUMARATE_LYASES"/>
    <property type="match status" value="1"/>
</dbReference>
<protein>
    <recommendedName>
        <fullName evidence="1">Argininosuccinate lyase</fullName>
        <shortName evidence="1">ASAL</shortName>
        <ecNumber evidence="1">4.3.2.1</ecNumber>
    </recommendedName>
    <alternativeName>
        <fullName evidence="1">Arginosuccinase</fullName>
    </alternativeName>
</protein>
<reference key="1">
    <citation type="journal article" date="2003" name="Proc. Natl. Acad. Sci. U.S.A.">
        <title>The genome sequence of Clostridium tetani, the causative agent of tetanus disease.</title>
        <authorList>
            <person name="Brueggemann H."/>
            <person name="Baeumer S."/>
            <person name="Fricke W.F."/>
            <person name="Wiezer A."/>
            <person name="Liesegang H."/>
            <person name="Decker I."/>
            <person name="Herzberg C."/>
            <person name="Martinez-Arias R."/>
            <person name="Merkl R."/>
            <person name="Henne A."/>
            <person name="Gottschalk G."/>
        </authorList>
    </citation>
    <scope>NUCLEOTIDE SEQUENCE [LARGE SCALE GENOMIC DNA]</scope>
    <source>
        <strain>Massachusetts / E88</strain>
    </source>
</reference>
<feature type="chain" id="PRO_0000137761" description="Argininosuccinate lyase">
    <location>
        <begin position="1"/>
        <end position="438"/>
    </location>
</feature>
<accession>P59616</accession>
<proteinExistence type="inferred from homology"/>
<name>ARLY_CLOTE</name>
<keyword id="KW-0028">Amino-acid biosynthesis</keyword>
<keyword id="KW-0055">Arginine biosynthesis</keyword>
<keyword id="KW-0963">Cytoplasm</keyword>
<keyword id="KW-0456">Lyase</keyword>
<keyword id="KW-1185">Reference proteome</keyword>
<gene>
    <name evidence="1" type="primary">argH</name>
    <name type="ordered locus">CTC_00562</name>
</gene>
<organism>
    <name type="scientific">Clostridium tetani (strain Massachusetts / E88)</name>
    <dbReference type="NCBI Taxonomy" id="212717"/>
    <lineage>
        <taxon>Bacteria</taxon>
        <taxon>Bacillati</taxon>
        <taxon>Bacillota</taxon>
        <taxon>Clostridia</taxon>
        <taxon>Eubacteriales</taxon>
        <taxon>Clostridiaceae</taxon>
        <taxon>Clostridium</taxon>
    </lineage>
</organism>
<comment type="catalytic activity">
    <reaction evidence="1">
        <text>2-(N(omega)-L-arginino)succinate = fumarate + L-arginine</text>
        <dbReference type="Rhea" id="RHEA:24020"/>
        <dbReference type="ChEBI" id="CHEBI:29806"/>
        <dbReference type="ChEBI" id="CHEBI:32682"/>
        <dbReference type="ChEBI" id="CHEBI:57472"/>
        <dbReference type="EC" id="4.3.2.1"/>
    </reaction>
</comment>
<comment type="pathway">
    <text evidence="1">Amino-acid biosynthesis; L-arginine biosynthesis; L-arginine from L-ornithine and carbamoyl phosphate: step 3/3.</text>
</comment>
<comment type="subcellular location">
    <subcellularLocation>
        <location evidence="1">Cytoplasm</location>
    </subcellularLocation>
</comment>
<comment type="similarity">
    <text evidence="1">Belongs to the lyase 1 family. Argininosuccinate lyase subfamily.</text>
</comment>